<comment type="function">
    <text evidence="1">Reversibly transfers an adenylyl group from ATP to 4'-phosphopantetheine, yielding dephospho-CoA (dPCoA) and pyrophosphate.</text>
</comment>
<comment type="catalytic activity">
    <reaction evidence="1">
        <text>(R)-4'-phosphopantetheine + ATP + H(+) = 3'-dephospho-CoA + diphosphate</text>
        <dbReference type="Rhea" id="RHEA:19801"/>
        <dbReference type="ChEBI" id="CHEBI:15378"/>
        <dbReference type="ChEBI" id="CHEBI:30616"/>
        <dbReference type="ChEBI" id="CHEBI:33019"/>
        <dbReference type="ChEBI" id="CHEBI:57328"/>
        <dbReference type="ChEBI" id="CHEBI:61723"/>
        <dbReference type="EC" id="2.7.7.3"/>
    </reaction>
</comment>
<comment type="cofactor">
    <cofactor evidence="1">
        <name>Mg(2+)</name>
        <dbReference type="ChEBI" id="CHEBI:18420"/>
    </cofactor>
</comment>
<comment type="pathway">
    <text evidence="1">Cofactor biosynthesis; coenzyme A biosynthesis; CoA from (R)-pantothenate: step 4/5.</text>
</comment>
<comment type="subunit">
    <text evidence="1">Homohexamer.</text>
</comment>
<comment type="subcellular location">
    <subcellularLocation>
        <location evidence="1">Cytoplasm</location>
    </subcellularLocation>
</comment>
<comment type="similarity">
    <text evidence="1">Belongs to the bacterial CoaD family.</text>
</comment>
<accession>Q1CD06</accession>
<accession>D1Q2F7</accession>
<evidence type="ECO:0000255" key="1">
    <source>
        <dbReference type="HAMAP-Rule" id="MF_00151"/>
    </source>
</evidence>
<gene>
    <name evidence="1" type="primary">coaD</name>
    <name type="ordered locus">YPN_3797</name>
    <name type="ORF">YP516_4317</name>
</gene>
<name>COAD_YERPN</name>
<proteinExistence type="inferred from homology"/>
<sequence length="159" mass="17651">MITKAIYPGTFDPITNGHLDLVTRASAMFSHVILAIADSSSKKPMFTLDERVALAKKVTAPLKNVEVLGFSELMAEFAKKHNANILVRGLRSVSDFEYEWQLANMNRHLMPKLESVFLIPSEKWSFISSSLVKEVARHGGDITPFLPKPVTKALLAKLA</sequence>
<reference key="1">
    <citation type="journal article" date="2006" name="J. Bacteriol.">
        <title>Complete genome sequence of Yersinia pestis strains Antiqua and Nepal516: evidence of gene reduction in an emerging pathogen.</title>
        <authorList>
            <person name="Chain P.S.G."/>
            <person name="Hu P."/>
            <person name="Malfatti S.A."/>
            <person name="Radnedge L."/>
            <person name="Larimer F."/>
            <person name="Vergez L.M."/>
            <person name="Worsham P."/>
            <person name="Chu M.C."/>
            <person name="Andersen G.L."/>
        </authorList>
    </citation>
    <scope>NUCLEOTIDE SEQUENCE [LARGE SCALE GENOMIC DNA]</scope>
    <source>
        <strain>Nepal516</strain>
    </source>
</reference>
<reference key="2">
    <citation type="submission" date="2009-04" db="EMBL/GenBank/DDBJ databases">
        <title>Yersinia pestis Nepal516A whole genome shotgun sequencing project.</title>
        <authorList>
            <person name="Plunkett G. III"/>
            <person name="Anderson B.D."/>
            <person name="Baumler D.J."/>
            <person name="Burland V."/>
            <person name="Cabot E.L."/>
            <person name="Glasner J.D."/>
            <person name="Mau B."/>
            <person name="Neeno-Eckwall E."/>
            <person name="Perna N.T."/>
            <person name="Munk A.C."/>
            <person name="Tapia R."/>
            <person name="Green L.D."/>
            <person name="Rogers Y.C."/>
            <person name="Detter J.C."/>
            <person name="Bruce D.C."/>
            <person name="Brettin T.S."/>
        </authorList>
    </citation>
    <scope>NUCLEOTIDE SEQUENCE [LARGE SCALE GENOMIC DNA]</scope>
    <source>
        <strain>Nepal516</strain>
    </source>
</reference>
<keyword id="KW-0067">ATP-binding</keyword>
<keyword id="KW-0173">Coenzyme A biosynthesis</keyword>
<keyword id="KW-0963">Cytoplasm</keyword>
<keyword id="KW-0460">Magnesium</keyword>
<keyword id="KW-0547">Nucleotide-binding</keyword>
<keyword id="KW-0548">Nucleotidyltransferase</keyword>
<keyword id="KW-0808">Transferase</keyword>
<organism>
    <name type="scientific">Yersinia pestis bv. Antiqua (strain Nepal516)</name>
    <dbReference type="NCBI Taxonomy" id="377628"/>
    <lineage>
        <taxon>Bacteria</taxon>
        <taxon>Pseudomonadati</taxon>
        <taxon>Pseudomonadota</taxon>
        <taxon>Gammaproteobacteria</taxon>
        <taxon>Enterobacterales</taxon>
        <taxon>Yersiniaceae</taxon>
        <taxon>Yersinia</taxon>
    </lineage>
</organism>
<protein>
    <recommendedName>
        <fullName evidence="1">Phosphopantetheine adenylyltransferase</fullName>
        <ecNumber evidence="1">2.7.7.3</ecNumber>
    </recommendedName>
    <alternativeName>
        <fullName evidence="1">Dephospho-CoA pyrophosphorylase</fullName>
    </alternativeName>
    <alternativeName>
        <fullName evidence="1">Pantetheine-phosphate adenylyltransferase</fullName>
        <shortName evidence="1">PPAT</shortName>
    </alternativeName>
</protein>
<feature type="chain" id="PRO_1000011282" description="Phosphopantetheine adenylyltransferase">
    <location>
        <begin position="1"/>
        <end position="159"/>
    </location>
</feature>
<feature type="binding site" evidence="1">
    <location>
        <begin position="10"/>
        <end position="11"/>
    </location>
    <ligand>
        <name>ATP</name>
        <dbReference type="ChEBI" id="CHEBI:30616"/>
    </ligand>
</feature>
<feature type="binding site" evidence="1">
    <location>
        <position position="10"/>
    </location>
    <ligand>
        <name>substrate</name>
    </ligand>
</feature>
<feature type="binding site" evidence="1">
    <location>
        <position position="18"/>
    </location>
    <ligand>
        <name>ATP</name>
        <dbReference type="ChEBI" id="CHEBI:30616"/>
    </ligand>
</feature>
<feature type="binding site" evidence="1">
    <location>
        <position position="42"/>
    </location>
    <ligand>
        <name>substrate</name>
    </ligand>
</feature>
<feature type="binding site" evidence="1">
    <location>
        <position position="74"/>
    </location>
    <ligand>
        <name>substrate</name>
    </ligand>
</feature>
<feature type="binding site" evidence="1">
    <location>
        <position position="88"/>
    </location>
    <ligand>
        <name>substrate</name>
    </ligand>
</feature>
<feature type="binding site" evidence="1">
    <location>
        <begin position="89"/>
        <end position="91"/>
    </location>
    <ligand>
        <name>ATP</name>
        <dbReference type="ChEBI" id="CHEBI:30616"/>
    </ligand>
</feature>
<feature type="binding site" evidence="1">
    <location>
        <position position="99"/>
    </location>
    <ligand>
        <name>ATP</name>
        <dbReference type="ChEBI" id="CHEBI:30616"/>
    </ligand>
</feature>
<feature type="binding site" evidence="1">
    <location>
        <begin position="124"/>
        <end position="130"/>
    </location>
    <ligand>
        <name>ATP</name>
        <dbReference type="ChEBI" id="CHEBI:30616"/>
    </ligand>
</feature>
<feature type="site" description="Transition state stabilizer" evidence="1">
    <location>
        <position position="18"/>
    </location>
</feature>
<dbReference type="EC" id="2.7.7.3" evidence="1"/>
<dbReference type="EMBL" id="CP000305">
    <property type="protein sequence ID" value="ABG20124.1"/>
    <property type="molecule type" value="Genomic_DNA"/>
</dbReference>
<dbReference type="EMBL" id="ACNQ01000019">
    <property type="protein sequence ID" value="EEO74710.1"/>
    <property type="molecule type" value="Genomic_DNA"/>
</dbReference>
<dbReference type="RefSeq" id="WP_002208988.1">
    <property type="nucleotide sequence ID" value="NZ_ACNQ01000019.1"/>
</dbReference>
<dbReference type="SMR" id="Q1CD06"/>
<dbReference type="GeneID" id="57974537"/>
<dbReference type="KEGG" id="ypn:YPN_3797"/>
<dbReference type="HOGENOM" id="CLU_100149_0_1_6"/>
<dbReference type="UniPathway" id="UPA00241">
    <property type="reaction ID" value="UER00355"/>
</dbReference>
<dbReference type="Proteomes" id="UP000008936">
    <property type="component" value="Chromosome"/>
</dbReference>
<dbReference type="GO" id="GO:0005737">
    <property type="term" value="C:cytoplasm"/>
    <property type="evidence" value="ECO:0007669"/>
    <property type="project" value="UniProtKB-SubCell"/>
</dbReference>
<dbReference type="GO" id="GO:0005524">
    <property type="term" value="F:ATP binding"/>
    <property type="evidence" value="ECO:0007669"/>
    <property type="project" value="UniProtKB-KW"/>
</dbReference>
<dbReference type="GO" id="GO:0004595">
    <property type="term" value="F:pantetheine-phosphate adenylyltransferase activity"/>
    <property type="evidence" value="ECO:0007669"/>
    <property type="project" value="UniProtKB-UniRule"/>
</dbReference>
<dbReference type="GO" id="GO:0015937">
    <property type="term" value="P:coenzyme A biosynthetic process"/>
    <property type="evidence" value="ECO:0007669"/>
    <property type="project" value="UniProtKB-UniRule"/>
</dbReference>
<dbReference type="CDD" id="cd02163">
    <property type="entry name" value="PPAT"/>
    <property type="match status" value="1"/>
</dbReference>
<dbReference type="FunFam" id="3.40.50.620:FF:000012">
    <property type="entry name" value="Phosphopantetheine adenylyltransferase"/>
    <property type="match status" value="1"/>
</dbReference>
<dbReference type="Gene3D" id="3.40.50.620">
    <property type="entry name" value="HUPs"/>
    <property type="match status" value="1"/>
</dbReference>
<dbReference type="HAMAP" id="MF_00151">
    <property type="entry name" value="PPAT_bact"/>
    <property type="match status" value="1"/>
</dbReference>
<dbReference type="InterPro" id="IPR004821">
    <property type="entry name" value="Cyt_trans-like"/>
</dbReference>
<dbReference type="InterPro" id="IPR001980">
    <property type="entry name" value="PPAT"/>
</dbReference>
<dbReference type="InterPro" id="IPR014729">
    <property type="entry name" value="Rossmann-like_a/b/a_fold"/>
</dbReference>
<dbReference type="NCBIfam" id="TIGR01510">
    <property type="entry name" value="coaD_prev_kdtB"/>
    <property type="match status" value="1"/>
</dbReference>
<dbReference type="NCBIfam" id="TIGR00125">
    <property type="entry name" value="cyt_tran_rel"/>
    <property type="match status" value="1"/>
</dbReference>
<dbReference type="PANTHER" id="PTHR21342">
    <property type="entry name" value="PHOSPHOPANTETHEINE ADENYLYLTRANSFERASE"/>
    <property type="match status" value="1"/>
</dbReference>
<dbReference type="PANTHER" id="PTHR21342:SF1">
    <property type="entry name" value="PHOSPHOPANTETHEINE ADENYLYLTRANSFERASE"/>
    <property type="match status" value="1"/>
</dbReference>
<dbReference type="Pfam" id="PF01467">
    <property type="entry name" value="CTP_transf_like"/>
    <property type="match status" value="1"/>
</dbReference>
<dbReference type="PRINTS" id="PR01020">
    <property type="entry name" value="LPSBIOSNTHSS"/>
</dbReference>
<dbReference type="SUPFAM" id="SSF52374">
    <property type="entry name" value="Nucleotidylyl transferase"/>
    <property type="match status" value="1"/>
</dbReference>